<feature type="signal peptide" evidence="2">
    <location>
        <begin position="1"/>
        <end position="28"/>
    </location>
</feature>
<feature type="chain" id="PRO_0000001331" description="Alpha-amylase">
    <location>
        <begin position="29"/>
        <end position="528"/>
    </location>
</feature>
<feature type="active site" description="Nucleophile" evidence="1">
    <location>
        <position position="258"/>
    </location>
</feature>
<feature type="active site" description="Proton donor" evidence="1">
    <location>
        <position position="286"/>
    </location>
</feature>
<feature type="binding site" evidence="1">
    <location>
        <position position="168"/>
    </location>
    <ligand>
        <name>Ca(2+)</name>
        <dbReference type="ChEBI" id="CHEBI:29108"/>
    </ligand>
</feature>
<feature type="binding site" evidence="1">
    <location>
        <position position="228"/>
    </location>
    <ligand>
        <name>Ca(2+)</name>
        <dbReference type="ChEBI" id="CHEBI:29108"/>
    </ligand>
</feature>
<feature type="binding site" evidence="1">
    <location>
        <position position="262"/>
    </location>
    <ligand>
        <name>Ca(2+)</name>
        <dbReference type="ChEBI" id="CHEBI:29108"/>
    </ligand>
</feature>
<feature type="site" description="Transition state stabilizer" evidence="1">
    <location>
        <position position="357"/>
    </location>
</feature>
<sequence>MNKKWLNIPALIALLAAIAFGSVAPAEAAPATSVSNKQNFSTDVIYQIVTDRFVDGNTANNPAGSAYDATCSTNLKLYCGGDWQGIMNKINDGYFTGMGITALWISQPVENIYSVINYSGVNNTAYHGYWARDFKKTNPAFGSMTDFANLISAAHSRNIKVVIDFAPNHTSPAMETNASFGENGKLYDNGTLLGGYTGDTNGYFHHNGGTDFSTLKNGIYKNLYDLADLNHNNSTIDTYFKNAIRLWLDMGIDGIRVDAVKHMPFGWQKNWMSSIYSYKPVFTFGEWFLGTNETDANNTYFANESGMSLLDFRFSQKVRQVFRDGSDTMYGLDSMLSSTAADYYSVNDQVTFLDNHDMDRFQVSGANGRKLEQALALTLTSRGVPAIYYGTEQYMTGNGDPNNRAKMSSFSTSTTAYNVISKLAPLRKSNPAIAYGTTQQRWINNDVYIYERKFGNNVAVVAINKNLTSSYSIAGLNTSLPSGTYTDVLANSLSGNSITVGSSGAVNTFTLQAGGEASGLTRRRQRLR</sequence>
<evidence type="ECO:0000250" key="1"/>
<evidence type="ECO:0000255" key="2"/>
<evidence type="ECO:0000305" key="3"/>
<keyword id="KW-0106">Calcium</keyword>
<keyword id="KW-0119">Carbohydrate metabolism</keyword>
<keyword id="KW-0326">Glycosidase</keyword>
<keyword id="KW-0378">Hydrolase</keyword>
<keyword id="KW-0479">Metal-binding</keyword>
<keyword id="KW-0732">Signal</keyword>
<organism>
    <name type="scientific">Niallia circulans</name>
    <name type="common">Bacillus circulans</name>
    <dbReference type="NCBI Taxonomy" id="1397"/>
    <lineage>
        <taxon>Bacteria</taxon>
        <taxon>Bacillati</taxon>
        <taxon>Bacillota</taxon>
        <taxon>Bacilli</taxon>
        <taxon>Bacillales</taxon>
        <taxon>Bacillaceae</taxon>
        <taxon>Niallia</taxon>
    </lineage>
</organism>
<reference key="1">
    <citation type="journal article" date="1987" name="DNA">
        <title>Molecular cloning of an amylase gene of Bacillus circulans.</title>
        <authorList>
            <person name="Nishizawa M."/>
            <person name="Ozawa F."/>
            <person name="Hishinuma F."/>
        </authorList>
    </citation>
    <scope>NUCLEOTIDE SEQUENCE [GENOMIC DNA]</scope>
</reference>
<name>AMY_NIACI</name>
<comment type="catalytic activity">
    <reaction>
        <text>Endohydrolysis of (1-&gt;4)-alpha-D-glucosidic linkages in polysaccharides containing three or more (1-&gt;4)-alpha-linked D-glucose units.</text>
        <dbReference type="EC" id="3.2.1.1"/>
    </reaction>
</comment>
<comment type="cofactor">
    <cofactor evidence="1">
        <name>Ca(2+)</name>
        <dbReference type="ChEBI" id="CHEBI:29108"/>
    </cofactor>
    <text evidence="1">Binds 1 Ca(2+) ion per subunit.</text>
</comment>
<comment type="subunit">
    <text evidence="1">Monomer.</text>
</comment>
<comment type="similarity">
    <text evidence="3">Belongs to the glycosyl hydrolase 13 family.</text>
</comment>
<protein>
    <recommendedName>
        <fullName>Alpha-amylase</fullName>
        <ecNumber>3.2.1.1</ecNumber>
    </recommendedName>
    <alternativeName>
        <fullName>1,4-alpha-D-glucan glucanohydrolase</fullName>
    </alternativeName>
</protein>
<dbReference type="EC" id="3.2.1.1"/>
<dbReference type="EMBL" id="M16657">
    <property type="protein sequence ID" value="AAA22229.1"/>
    <property type="molecule type" value="Genomic_DNA"/>
</dbReference>
<dbReference type="PIR" id="A29083">
    <property type="entry name" value="ALBSK"/>
</dbReference>
<dbReference type="SMR" id="P08137"/>
<dbReference type="CAZy" id="GH13">
    <property type="family name" value="Glycoside Hydrolase Family 13"/>
</dbReference>
<dbReference type="GO" id="GO:0004556">
    <property type="term" value="F:alpha-amylase activity"/>
    <property type="evidence" value="ECO:0007669"/>
    <property type="project" value="UniProtKB-EC"/>
</dbReference>
<dbReference type="GO" id="GO:0005509">
    <property type="term" value="F:calcium ion binding"/>
    <property type="evidence" value="ECO:0007669"/>
    <property type="project" value="InterPro"/>
</dbReference>
<dbReference type="GO" id="GO:0005975">
    <property type="term" value="P:carbohydrate metabolic process"/>
    <property type="evidence" value="ECO:0007669"/>
    <property type="project" value="InterPro"/>
</dbReference>
<dbReference type="CDD" id="cd11320">
    <property type="entry name" value="AmyAc_AmyMalt_CGTase_like"/>
    <property type="match status" value="1"/>
</dbReference>
<dbReference type="Gene3D" id="3.20.20.80">
    <property type="entry name" value="Glycosidases"/>
    <property type="match status" value="1"/>
</dbReference>
<dbReference type="Gene3D" id="2.60.40.1180">
    <property type="entry name" value="Golgi alpha-mannosidase II"/>
    <property type="match status" value="1"/>
</dbReference>
<dbReference type="InterPro" id="IPR013777">
    <property type="entry name" value="A-amylase-like"/>
</dbReference>
<dbReference type="InterPro" id="IPR006048">
    <property type="entry name" value="A-amylase/branching_C"/>
</dbReference>
<dbReference type="InterPro" id="IPR031319">
    <property type="entry name" value="A-amylase_C"/>
</dbReference>
<dbReference type="InterPro" id="IPR006046">
    <property type="entry name" value="Alpha_amylase"/>
</dbReference>
<dbReference type="InterPro" id="IPR006047">
    <property type="entry name" value="Glyco_hydro_13_cat_dom"/>
</dbReference>
<dbReference type="InterPro" id="IPR013780">
    <property type="entry name" value="Glyco_hydro_b"/>
</dbReference>
<dbReference type="InterPro" id="IPR017853">
    <property type="entry name" value="Glycoside_hydrolase_SF"/>
</dbReference>
<dbReference type="PANTHER" id="PTHR10357:SF215">
    <property type="entry name" value="ALPHA-AMYLASE 1"/>
    <property type="match status" value="1"/>
</dbReference>
<dbReference type="PANTHER" id="PTHR10357">
    <property type="entry name" value="ALPHA-AMYLASE FAMILY MEMBER"/>
    <property type="match status" value="1"/>
</dbReference>
<dbReference type="Pfam" id="PF00128">
    <property type="entry name" value="Alpha-amylase"/>
    <property type="match status" value="1"/>
</dbReference>
<dbReference type="Pfam" id="PF02806">
    <property type="entry name" value="Alpha-amylase_C"/>
    <property type="match status" value="1"/>
</dbReference>
<dbReference type="PIRSF" id="PIRSF001024">
    <property type="entry name" value="Alph-amyl_fung"/>
    <property type="match status" value="1"/>
</dbReference>
<dbReference type="PRINTS" id="PR00110">
    <property type="entry name" value="ALPHAAMYLASE"/>
</dbReference>
<dbReference type="SMART" id="SM00642">
    <property type="entry name" value="Aamy"/>
    <property type="match status" value="1"/>
</dbReference>
<dbReference type="SMART" id="SM00632">
    <property type="entry name" value="Aamy_C"/>
    <property type="match status" value="1"/>
</dbReference>
<dbReference type="SUPFAM" id="SSF51445">
    <property type="entry name" value="(Trans)glycosidases"/>
    <property type="match status" value="1"/>
</dbReference>
<dbReference type="SUPFAM" id="SSF51011">
    <property type="entry name" value="Glycosyl hydrolase domain"/>
    <property type="match status" value="1"/>
</dbReference>
<proteinExistence type="inferred from homology"/>
<accession>P08137</accession>